<proteinExistence type="evidence at protein level"/>
<organism>
    <name type="scientific">Caenorhabditis elegans</name>
    <dbReference type="NCBI Taxonomy" id="6239"/>
    <lineage>
        <taxon>Eukaryota</taxon>
        <taxon>Metazoa</taxon>
        <taxon>Ecdysozoa</taxon>
        <taxon>Nematoda</taxon>
        <taxon>Chromadorea</taxon>
        <taxon>Rhabditida</taxon>
        <taxon>Rhabditina</taxon>
        <taxon>Rhabditomorpha</taxon>
        <taxon>Rhabditoidea</taxon>
        <taxon>Rhabditidae</taxon>
        <taxon>Peloderinae</taxon>
        <taxon>Caenorhabditis</taxon>
    </lineage>
</organism>
<sequence length="145" mass="16830">MAFTFAAFCYLLALIAVGFCIFFAIYTVICVDELRTDYKNPIEQCRNLNQLILPEYIIHGTFTVLFIFSWQLISILANLPLAFYHIYTYAKRPVMSGPGIYDPTTILNRSTLSSTLRISWIKLAFYLVSFFYYLYAMIYTLVTSN</sequence>
<reference key="1">
    <citation type="journal article" date="1998" name="Science">
        <title>Genome sequence of the nematode C. elegans: a platform for investigating biology.</title>
        <authorList>
            <consortium name="The C. elegans sequencing consortium"/>
        </authorList>
    </citation>
    <scope>NUCLEOTIDE SEQUENCE [LARGE SCALE GENOMIC DNA]</scope>
    <source>
        <strain>Bristol N2</strain>
    </source>
</reference>
<reference key="2">
    <citation type="journal article" date="2012" name="J. Cell Biol.">
        <title>RAB-6.2 and the retromer regulate glutamate receptor recycling through a retrograde pathway.</title>
        <authorList>
            <person name="Zhang D."/>
            <person name="Isack N.R."/>
            <person name="Glodowski D.R."/>
            <person name="Liu J."/>
            <person name="Chen C.C."/>
            <person name="Xu X.Z."/>
            <person name="Grant B.D."/>
            <person name="Rongo C."/>
        </authorList>
    </citation>
    <scope>SUBCELLULAR LOCATION</scope>
</reference>
<reference key="3">
    <citation type="journal article" date="2013" name="Neuron">
        <title>Cornichons control ER export of AMPA receptors to regulate synaptic excitability.</title>
        <authorList>
            <person name="Brockie P.J."/>
            <person name="Jensen M."/>
            <person name="Mellem J.E."/>
            <person name="Jensen E."/>
            <person name="Yamasaki T."/>
            <person name="Wang R."/>
            <person name="Maxfield D."/>
            <person name="Thacker C."/>
            <person name="Hoerndli F."/>
            <person name="Dunn P.J."/>
            <person name="Tomita S."/>
            <person name="Madsen D.M."/>
            <person name="Maricq A.V."/>
        </authorList>
    </citation>
    <scope>FUNCTION</scope>
    <scope>INTERACTION WITH GLR-1</scope>
    <scope>SUBCELLULAR LOCATION</scope>
    <scope>TISSUE SPECIFICITY</scope>
    <scope>DISRUPTION PHENOTYPE</scope>
</reference>
<comment type="function">
    <text evidence="3">Negatively regulates export of glr-1 from the endoplasmic reticulum to synapses.</text>
</comment>
<comment type="subunit">
    <text evidence="3">Interacts with glr-1.</text>
</comment>
<comment type="subcellular location">
    <subcellularLocation>
        <location evidence="3">Endoplasmic reticulum membrane</location>
        <topology evidence="1">Multi-pass membrane protein</topology>
    </subcellularLocation>
    <subcellularLocation>
        <location evidence="3">Synapse</location>
    </subcellularLocation>
    <subcellularLocation>
        <location evidence="2">Cell projection</location>
        <location evidence="2">Dendrite</location>
    </subcellularLocation>
</comment>
<comment type="tissue specificity">
    <text evidence="3">Widely expressed in the nervous system including in the AVA interneurons.</text>
</comment>
<comment type="disruption phenotype">
    <text evidence="3">Hyperreversal phenotype with considerably shorter average forward time than wild-type and a corresponding increase in frequency of reversals. Increased anterograde transport of glr-1 with corresponding increases in synaptic glr-1 expression and glr-1-mediated currents. Altered pattern of glr-1 glycosylation, indicative of increased export from the endoplasmic reticulum.</text>
</comment>
<comment type="similarity">
    <text evidence="5">Belongs to the cornichon family.</text>
</comment>
<accession>Q22361</accession>
<dbReference type="EMBL" id="Z78065">
    <property type="protein sequence ID" value="CAB01516.2"/>
    <property type="molecule type" value="Genomic_DNA"/>
</dbReference>
<dbReference type="PIR" id="A89261">
    <property type="entry name" value="A89261"/>
</dbReference>
<dbReference type="PIR" id="T24750">
    <property type="entry name" value="T24750"/>
</dbReference>
<dbReference type="RefSeq" id="NP_506278.1">
    <property type="nucleotide sequence ID" value="NM_073877.7"/>
</dbReference>
<dbReference type="SMR" id="Q22361"/>
<dbReference type="BioGRID" id="44819">
    <property type="interactions" value="1"/>
</dbReference>
<dbReference type="FunCoup" id="Q22361">
    <property type="interactions" value="2779"/>
</dbReference>
<dbReference type="STRING" id="6239.T09E8.3.1"/>
<dbReference type="PaxDb" id="6239-T09E8.3"/>
<dbReference type="PeptideAtlas" id="Q22361"/>
<dbReference type="EnsemblMetazoa" id="T09E8.3.1">
    <property type="protein sequence ID" value="T09E8.3.1"/>
    <property type="gene ID" value="WBGene00011648"/>
</dbReference>
<dbReference type="GeneID" id="179801"/>
<dbReference type="KEGG" id="cel:CELE_T09E8.3"/>
<dbReference type="UCSC" id="T09E8.3">
    <property type="organism name" value="c. elegans"/>
</dbReference>
<dbReference type="AGR" id="WB:WBGene00011648"/>
<dbReference type="CTD" id="179801"/>
<dbReference type="WormBase" id="T09E8.3">
    <property type="protein sequence ID" value="CE23961"/>
    <property type="gene ID" value="WBGene00011648"/>
    <property type="gene designation" value="cni-1"/>
</dbReference>
<dbReference type="eggNOG" id="KOG2729">
    <property type="taxonomic scope" value="Eukaryota"/>
</dbReference>
<dbReference type="GeneTree" id="ENSGT00950000182834"/>
<dbReference type="HOGENOM" id="CLU_112942_1_0_1"/>
<dbReference type="InParanoid" id="Q22361"/>
<dbReference type="OMA" id="YTVICVD"/>
<dbReference type="OrthoDB" id="434393at2759"/>
<dbReference type="PhylomeDB" id="Q22361"/>
<dbReference type="Reactome" id="R-CEL-204005">
    <property type="pathway name" value="COPII-mediated vesicle transport"/>
</dbReference>
<dbReference type="Reactome" id="R-CEL-5694530">
    <property type="pathway name" value="Cargo concentration in the ER"/>
</dbReference>
<dbReference type="PRO" id="PR:Q22361"/>
<dbReference type="Proteomes" id="UP000001940">
    <property type="component" value="Chromosome V"/>
</dbReference>
<dbReference type="Bgee" id="WBGene00011648">
    <property type="expression patterns" value="Expressed in pharyngeal muscle cell (C elegans) and 4 other cell types or tissues"/>
</dbReference>
<dbReference type="GO" id="GO:0030134">
    <property type="term" value="C:COPII-coated ER to Golgi transport vesicle"/>
    <property type="evidence" value="ECO:0000318"/>
    <property type="project" value="GO_Central"/>
</dbReference>
<dbReference type="GO" id="GO:0030425">
    <property type="term" value="C:dendrite"/>
    <property type="evidence" value="ECO:0000315"/>
    <property type="project" value="UniProtKB"/>
</dbReference>
<dbReference type="GO" id="GO:0005783">
    <property type="term" value="C:endoplasmic reticulum"/>
    <property type="evidence" value="ECO:0000314"/>
    <property type="project" value="WormBase"/>
</dbReference>
<dbReference type="GO" id="GO:0005789">
    <property type="term" value="C:endoplasmic reticulum membrane"/>
    <property type="evidence" value="ECO:0000318"/>
    <property type="project" value="GO_Central"/>
</dbReference>
<dbReference type="GO" id="GO:0005794">
    <property type="term" value="C:Golgi apparatus"/>
    <property type="evidence" value="ECO:0000314"/>
    <property type="project" value="UniProtKB"/>
</dbReference>
<dbReference type="GO" id="GO:0043025">
    <property type="term" value="C:neuronal cell body"/>
    <property type="evidence" value="ECO:0000314"/>
    <property type="project" value="UniProtKB"/>
</dbReference>
<dbReference type="GO" id="GO:0097038">
    <property type="term" value="C:perinuclear endoplasmic reticulum"/>
    <property type="evidence" value="ECO:0000314"/>
    <property type="project" value="UniProtKB"/>
</dbReference>
<dbReference type="GO" id="GO:0045202">
    <property type="term" value="C:synapse"/>
    <property type="evidence" value="ECO:0000314"/>
    <property type="project" value="UniProtKB"/>
</dbReference>
<dbReference type="GO" id="GO:0005102">
    <property type="term" value="F:signaling receptor binding"/>
    <property type="evidence" value="ECO:0000353"/>
    <property type="project" value="UniProtKB"/>
</dbReference>
<dbReference type="GO" id="GO:0006888">
    <property type="term" value="P:endoplasmic reticulum to Golgi vesicle-mediated transport"/>
    <property type="evidence" value="ECO:0000318"/>
    <property type="project" value="GO_Central"/>
</dbReference>
<dbReference type="GO" id="GO:1903743">
    <property type="term" value="P:negative regulation of anterograde synaptic vesicle transport"/>
    <property type="evidence" value="ECO:0000315"/>
    <property type="project" value="UniProtKB"/>
</dbReference>
<dbReference type="GO" id="GO:1902684">
    <property type="term" value="P:negative regulation of receptor localization to synapse"/>
    <property type="evidence" value="ECO:0000315"/>
    <property type="project" value="UniProtKB"/>
</dbReference>
<dbReference type="GO" id="GO:1904294">
    <property type="term" value="P:positive regulation of ERAD pathway"/>
    <property type="evidence" value="ECO:0000315"/>
    <property type="project" value="UniProtKB"/>
</dbReference>
<dbReference type="GO" id="GO:2000311">
    <property type="term" value="P:regulation of AMPA receptor activity"/>
    <property type="evidence" value="ECO:0000315"/>
    <property type="project" value="UniProtKB"/>
</dbReference>
<dbReference type="GO" id="GO:0050795">
    <property type="term" value="P:regulation of behavior"/>
    <property type="evidence" value="ECO:0000315"/>
    <property type="project" value="UniProtKB"/>
</dbReference>
<dbReference type="GO" id="GO:2000310">
    <property type="term" value="P:regulation of NMDA receptor activity"/>
    <property type="evidence" value="ECO:0000315"/>
    <property type="project" value="UniProtKB"/>
</dbReference>
<dbReference type="InterPro" id="IPR003377">
    <property type="entry name" value="Cornichon"/>
</dbReference>
<dbReference type="InterPro" id="IPR033466">
    <property type="entry name" value="Cornichon_conserved"/>
</dbReference>
<dbReference type="PANTHER" id="PTHR12290">
    <property type="entry name" value="CORNICHON-RELATED"/>
    <property type="match status" value="1"/>
</dbReference>
<dbReference type="Pfam" id="PF03311">
    <property type="entry name" value="Cornichon"/>
    <property type="match status" value="1"/>
</dbReference>
<dbReference type="SMART" id="SM01398">
    <property type="entry name" value="Cornichon"/>
    <property type="match status" value="1"/>
</dbReference>
<dbReference type="PROSITE" id="PS01340">
    <property type="entry name" value="CORNICHON"/>
    <property type="match status" value="1"/>
</dbReference>
<feature type="chain" id="PRO_0000122239" description="Protein cornichon homolog 1">
    <location>
        <begin position="1"/>
        <end position="145"/>
    </location>
</feature>
<feature type="transmembrane region" description="Helical" evidence="1">
    <location>
        <begin position="5"/>
        <end position="25"/>
    </location>
</feature>
<feature type="transmembrane region" description="Helical" evidence="1">
    <location>
        <begin position="57"/>
        <end position="77"/>
    </location>
</feature>
<feature type="transmembrane region" description="Helical" evidence="1">
    <location>
        <begin position="116"/>
        <end position="136"/>
    </location>
</feature>
<protein>
    <recommendedName>
        <fullName evidence="6">Protein cornichon homolog 1</fullName>
    </recommendedName>
</protein>
<keyword id="KW-0966">Cell projection</keyword>
<keyword id="KW-0256">Endoplasmic reticulum</keyword>
<keyword id="KW-0472">Membrane</keyword>
<keyword id="KW-1185">Reference proteome</keyword>
<keyword id="KW-0770">Synapse</keyword>
<keyword id="KW-0812">Transmembrane</keyword>
<keyword id="KW-1133">Transmembrane helix</keyword>
<gene>
    <name evidence="6" type="primary">cni-1</name>
    <name evidence="4" type="synonym">cnih-2</name>
    <name evidence="6" type="ORF">T09E8.3</name>
</gene>
<name>CNI1_CAEEL</name>
<evidence type="ECO:0000255" key="1"/>
<evidence type="ECO:0000269" key="2">
    <source>
    </source>
</evidence>
<evidence type="ECO:0000269" key="3">
    <source>
    </source>
</evidence>
<evidence type="ECO:0000303" key="4">
    <source>
    </source>
</evidence>
<evidence type="ECO:0000305" key="5"/>
<evidence type="ECO:0000312" key="6">
    <source>
        <dbReference type="WormBase" id="T09E8.3"/>
    </source>
</evidence>